<feature type="signal peptide" evidence="1">
    <location>
        <begin position="1"/>
        <end position="29"/>
    </location>
</feature>
<feature type="chain" id="PRO_1000078252" description="Outer-membrane lipoprotein LolB">
    <location>
        <begin position="30"/>
        <end position="210"/>
    </location>
</feature>
<feature type="lipid moiety-binding region" description="N-palmitoyl cysteine" evidence="1">
    <location>
        <position position="30"/>
    </location>
</feature>
<feature type="lipid moiety-binding region" description="S-diacylglycerol cysteine" evidence="1">
    <location>
        <position position="30"/>
    </location>
</feature>
<protein>
    <recommendedName>
        <fullName evidence="1">Outer-membrane lipoprotein LolB</fullName>
    </recommendedName>
</protein>
<evidence type="ECO:0000255" key="1">
    <source>
        <dbReference type="HAMAP-Rule" id="MF_00233"/>
    </source>
</evidence>
<gene>
    <name evidence="1" type="primary">lolB</name>
    <name type="ordered locus">CBUD_0058</name>
</gene>
<reference key="1">
    <citation type="journal article" date="2009" name="Infect. Immun.">
        <title>Comparative genomics reveal extensive transposon-mediated genomic plasticity and diversity among potential effector proteins within the genus Coxiella.</title>
        <authorList>
            <person name="Beare P.A."/>
            <person name="Unsworth N."/>
            <person name="Andoh M."/>
            <person name="Voth D.E."/>
            <person name="Omsland A."/>
            <person name="Gilk S.D."/>
            <person name="Williams K.P."/>
            <person name="Sobral B.W."/>
            <person name="Kupko J.J. III"/>
            <person name="Porcella S.F."/>
            <person name="Samuel J.E."/>
            <person name="Heinzen R.A."/>
        </authorList>
    </citation>
    <scope>NUCLEOTIDE SEQUENCE [LARGE SCALE GENOMIC DNA]</scope>
    <source>
        <strain>Dugway 5J108-111</strain>
    </source>
</reference>
<dbReference type="EMBL" id="CP000733">
    <property type="protein sequence ID" value="ABS78411.1"/>
    <property type="molecule type" value="Genomic_DNA"/>
</dbReference>
<dbReference type="RefSeq" id="WP_011996384.1">
    <property type="nucleotide sequence ID" value="NC_009727.1"/>
</dbReference>
<dbReference type="SMR" id="A9KF01"/>
<dbReference type="KEGG" id="cbd:CBUD_0058"/>
<dbReference type="HOGENOM" id="CLU_092816_2_1_6"/>
<dbReference type="Proteomes" id="UP000008555">
    <property type="component" value="Chromosome"/>
</dbReference>
<dbReference type="GO" id="GO:0009279">
    <property type="term" value="C:cell outer membrane"/>
    <property type="evidence" value="ECO:0007669"/>
    <property type="project" value="UniProtKB-SubCell"/>
</dbReference>
<dbReference type="GO" id="GO:0044874">
    <property type="term" value="P:lipoprotein localization to outer membrane"/>
    <property type="evidence" value="ECO:0007669"/>
    <property type="project" value="UniProtKB-UniRule"/>
</dbReference>
<dbReference type="GO" id="GO:0015031">
    <property type="term" value="P:protein transport"/>
    <property type="evidence" value="ECO:0007669"/>
    <property type="project" value="UniProtKB-KW"/>
</dbReference>
<dbReference type="CDD" id="cd16326">
    <property type="entry name" value="LolB"/>
    <property type="match status" value="1"/>
</dbReference>
<dbReference type="Gene3D" id="2.50.20.10">
    <property type="entry name" value="Lipoprotein localisation LolA/LolB/LppX"/>
    <property type="match status" value="1"/>
</dbReference>
<dbReference type="HAMAP" id="MF_00233">
    <property type="entry name" value="LolB"/>
    <property type="match status" value="1"/>
</dbReference>
<dbReference type="InterPro" id="IPR029046">
    <property type="entry name" value="LolA/LolB/LppX"/>
</dbReference>
<dbReference type="InterPro" id="IPR004565">
    <property type="entry name" value="OM_lipoprot_LolB"/>
</dbReference>
<dbReference type="NCBIfam" id="TIGR00548">
    <property type="entry name" value="lolB"/>
    <property type="match status" value="1"/>
</dbReference>
<dbReference type="Pfam" id="PF03550">
    <property type="entry name" value="LolB"/>
    <property type="match status" value="1"/>
</dbReference>
<dbReference type="SUPFAM" id="SSF89392">
    <property type="entry name" value="Prokaryotic lipoproteins and lipoprotein localization factors"/>
    <property type="match status" value="1"/>
</dbReference>
<proteinExistence type="inferred from homology"/>
<accession>A9KF01</accession>
<organism>
    <name type="scientific">Coxiella burnetii (strain Dugway 5J108-111)</name>
    <dbReference type="NCBI Taxonomy" id="434922"/>
    <lineage>
        <taxon>Bacteria</taxon>
        <taxon>Pseudomonadati</taxon>
        <taxon>Pseudomonadota</taxon>
        <taxon>Gammaproteobacteria</taxon>
        <taxon>Legionellales</taxon>
        <taxon>Coxiellaceae</taxon>
        <taxon>Coxiella</taxon>
    </lineage>
</organism>
<sequence>MSLISNNEERSLRVRYCIAIALSALLISGCTTLRLPNQSTSVYHQQTWAQRYYDLSRISQWNIDGAFSIQQPGKTIIAAYDWQQKGMNYRIRIHSSLDIYSVNISGRPGMVTLWRSPRQHYTASTPEQLMQQQLGWQLPLSNLYYWIRGIPAPGAYQADFDTYTHLIALQQSGWHIRFSQYTTVGSVDLPRTLQLSNGPLAVKIVVKHWQ</sequence>
<comment type="function">
    <text evidence="1">Plays a critical role in the incorporation of lipoproteins in the outer membrane after they are released by the LolA protein.</text>
</comment>
<comment type="subunit">
    <text evidence="1">Monomer.</text>
</comment>
<comment type="subcellular location">
    <subcellularLocation>
        <location evidence="1">Cell outer membrane</location>
        <topology evidence="1">Lipid-anchor</topology>
    </subcellularLocation>
</comment>
<comment type="similarity">
    <text evidence="1">Belongs to the LolB family.</text>
</comment>
<keyword id="KW-0998">Cell outer membrane</keyword>
<keyword id="KW-0143">Chaperone</keyword>
<keyword id="KW-0449">Lipoprotein</keyword>
<keyword id="KW-0472">Membrane</keyword>
<keyword id="KW-0564">Palmitate</keyword>
<keyword id="KW-0653">Protein transport</keyword>
<keyword id="KW-0732">Signal</keyword>
<keyword id="KW-0813">Transport</keyword>
<name>LOLB_COXBN</name>